<dbReference type="EMBL" id="AP009389">
    <property type="protein sequence ID" value="BAF59360.1"/>
    <property type="molecule type" value="Genomic_DNA"/>
</dbReference>
<dbReference type="SMR" id="A5D319"/>
<dbReference type="STRING" id="370438.PTH_1179"/>
<dbReference type="KEGG" id="pth:PTH_1179"/>
<dbReference type="eggNOG" id="COG0781">
    <property type="taxonomic scope" value="Bacteria"/>
</dbReference>
<dbReference type="HOGENOM" id="CLU_087843_3_3_9"/>
<dbReference type="Proteomes" id="UP000006556">
    <property type="component" value="Chromosome"/>
</dbReference>
<dbReference type="GO" id="GO:0005829">
    <property type="term" value="C:cytosol"/>
    <property type="evidence" value="ECO:0007669"/>
    <property type="project" value="TreeGrafter"/>
</dbReference>
<dbReference type="GO" id="GO:0003723">
    <property type="term" value="F:RNA binding"/>
    <property type="evidence" value="ECO:0007669"/>
    <property type="project" value="UniProtKB-UniRule"/>
</dbReference>
<dbReference type="GO" id="GO:0006353">
    <property type="term" value="P:DNA-templated transcription termination"/>
    <property type="evidence" value="ECO:0007669"/>
    <property type="project" value="UniProtKB-UniRule"/>
</dbReference>
<dbReference type="GO" id="GO:0031564">
    <property type="term" value="P:transcription antitermination"/>
    <property type="evidence" value="ECO:0007669"/>
    <property type="project" value="UniProtKB-KW"/>
</dbReference>
<dbReference type="CDD" id="cd00619">
    <property type="entry name" value="Terminator_NusB"/>
    <property type="match status" value="1"/>
</dbReference>
<dbReference type="Gene3D" id="1.10.940.10">
    <property type="entry name" value="NusB-like"/>
    <property type="match status" value="1"/>
</dbReference>
<dbReference type="HAMAP" id="MF_00073">
    <property type="entry name" value="NusB"/>
    <property type="match status" value="1"/>
</dbReference>
<dbReference type="InterPro" id="IPR035926">
    <property type="entry name" value="NusB-like_sf"/>
</dbReference>
<dbReference type="InterPro" id="IPR011605">
    <property type="entry name" value="NusB_fam"/>
</dbReference>
<dbReference type="InterPro" id="IPR006027">
    <property type="entry name" value="NusB_RsmB_TIM44"/>
</dbReference>
<dbReference type="NCBIfam" id="TIGR01951">
    <property type="entry name" value="nusB"/>
    <property type="match status" value="1"/>
</dbReference>
<dbReference type="PANTHER" id="PTHR11078:SF3">
    <property type="entry name" value="ANTITERMINATION NUSB DOMAIN-CONTAINING PROTEIN"/>
    <property type="match status" value="1"/>
</dbReference>
<dbReference type="PANTHER" id="PTHR11078">
    <property type="entry name" value="N UTILIZATION SUBSTANCE PROTEIN B-RELATED"/>
    <property type="match status" value="1"/>
</dbReference>
<dbReference type="Pfam" id="PF01029">
    <property type="entry name" value="NusB"/>
    <property type="match status" value="1"/>
</dbReference>
<dbReference type="SUPFAM" id="SSF48013">
    <property type="entry name" value="NusB-like"/>
    <property type="match status" value="1"/>
</dbReference>
<feature type="chain" id="PRO_1000075194" description="Transcription antitermination protein NusB">
    <location>
        <begin position="1"/>
        <end position="144"/>
    </location>
</feature>
<accession>A5D319</accession>
<keyword id="KW-1185">Reference proteome</keyword>
<keyword id="KW-0694">RNA-binding</keyword>
<keyword id="KW-0804">Transcription</keyword>
<keyword id="KW-0889">Transcription antitermination</keyword>
<keyword id="KW-0805">Transcription regulation</keyword>
<evidence type="ECO:0000255" key="1">
    <source>
        <dbReference type="HAMAP-Rule" id="MF_00073"/>
    </source>
</evidence>
<gene>
    <name evidence="1" type="primary">nusB</name>
    <name type="ordered locus">PTH_1179</name>
</gene>
<sequence length="144" mass="16106">MSRRQARERALQILFQVDVGGADPGEAFRLMDEGFGELKKYQEFARLLVGGTLENLAAIDRVIAGVSKDWNINRMANVDRNIIRMALYEIFFCEDIPYSVSVNEAVELGKTYGGEESGRFINGILGRIVESPEEYRPLIKGSAS</sequence>
<proteinExistence type="inferred from homology"/>
<name>NUSB_PELTS</name>
<comment type="function">
    <text evidence="1">Involved in transcription antitermination. Required for transcription of ribosomal RNA (rRNA) genes. Binds specifically to the boxA antiterminator sequence of the ribosomal RNA (rrn) operons.</text>
</comment>
<comment type="similarity">
    <text evidence="1">Belongs to the NusB family.</text>
</comment>
<reference key="1">
    <citation type="journal article" date="2008" name="Genome Res.">
        <title>The genome of Pelotomaculum thermopropionicum reveals niche-associated evolution in anaerobic microbiota.</title>
        <authorList>
            <person name="Kosaka T."/>
            <person name="Kato S."/>
            <person name="Shimoyama T."/>
            <person name="Ishii S."/>
            <person name="Abe T."/>
            <person name="Watanabe K."/>
        </authorList>
    </citation>
    <scope>NUCLEOTIDE SEQUENCE [LARGE SCALE GENOMIC DNA]</scope>
    <source>
        <strain>DSM 13744 / JCM 10971 / SI</strain>
    </source>
</reference>
<protein>
    <recommendedName>
        <fullName evidence="1">Transcription antitermination protein NusB</fullName>
    </recommendedName>
    <alternativeName>
        <fullName evidence="1">Antitermination factor NusB</fullName>
    </alternativeName>
</protein>
<organism>
    <name type="scientific">Pelotomaculum thermopropionicum (strain DSM 13744 / JCM 10971 / SI)</name>
    <dbReference type="NCBI Taxonomy" id="370438"/>
    <lineage>
        <taxon>Bacteria</taxon>
        <taxon>Bacillati</taxon>
        <taxon>Bacillota</taxon>
        <taxon>Clostridia</taxon>
        <taxon>Eubacteriales</taxon>
        <taxon>Desulfotomaculaceae</taxon>
        <taxon>Pelotomaculum</taxon>
    </lineage>
</organism>